<organism>
    <name type="scientific">Xenopus tropicalis</name>
    <name type="common">Western clawed frog</name>
    <name type="synonym">Silurana tropicalis</name>
    <dbReference type="NCBI Taxonomy" id="8364"/>
    <lineage>
        <taxon>Eukaryota</taxon>
        <taxon>Metazoa</taxon>
        <taxon>Chordata</taxon>
        <taxon>Craniata</taxon>
        <taxon>Vertebrata</taxon>
        <taxon>Euteleostomi</taxon>
        <taxon>Amphibia</taxon>
        <taxon>Batrachia</taxon>
        <taxon>Anura</taxon>
        <taxon>Pipoidea</taxon>
        <taxon>Pipidae</taxon>
        <taxon>Xenopodinae</taxon>
        <taxon>Xenopus</taxon>
        <taxon>Silurana</taxon>
    </lineage>
</organism>
<accession>Q6DFM9</accession>
<evidence type="ECO:0000250" key="1"/>
<evidence type="ECO:0000250" key="2">
    <source>
        <dbReference type="UniProtKB" id="Q15388"/>
    </source>
</evidence>
<evidence type="ECO:0000255" key="3"/>
<evidence type="ECO:0000305" key="4"/>
<proteinExistence type="evidence at transcript level"/>
<protein>
    <recommendedName>
        <fullName>Mitochondrial import receptor subunit TOM20 homolog</fullName>
    </recommendedName>
    <alternativeName>
        <fullName>Mitochondrial 20 kDa outer membrane protein</fullName>
    </alternativeName>
    <alternativeName>
        <fullName>Outer mitochondrial membrane receptor Tom20</fullName>
    </alternativeName>
</protein>
<reference key="1">
    <citation type="submission" date="2006-10" db="EMBL/GenBank/DDBJ databases">
        <authorList>
            <consortium name="Sanger Xenopus tropicalis EST/cDNA project"/>
        </authorList>
    </citation>
    <scope>NUCLEOTIDE SEQUENCE [LARGE SCALE MRNA]</scope>
    <source>
        <tissue>Neurula</tissue>
    </source>
</reference>
<reference key="2">
    <citation type="submission" date="2004-07" db="EMBL/GenBank/DDBJ databases">
        <authorList>
            <consortium name="NIH - Xenopus Gene Collection (XGC) project"/>
        </authorList>
    </citation>
    <scope>NUCLEOTIDE SEQUENCE [LARGE SCALE MRNA]</scope>
    <source>
        <tissue>Embryo</tissue>
    </source>
</reference>
<keyword id="KW-0472">Membrane</keyword>
<keyword id="KW-0496">Mitochondrion</keyword>
<keyword id="KW-1000">Mitochondrion outer membrane</keyword>
<keyword id="KW-0597">Phosphoprotein</keyword>
<keyword id="KW-0653">Protein transport</keyword>
<keyword id="KW-1185">Reference proteome</keyword>
<keyword id="KW-0812">Transmembrane</keyword>
<keyword id="KW-1133">Transmembrane helix</keyword>
<keyword id="KW-0813">Transport</keyword>
<name>TOM20_XENTR</name>
<feature type="chain" id="PRO_0000317746" description="Mitochondrial import receptor subunit TOM20 homolog">
    <location>
        <begin position="1"/>
        <end position="147"/>
    </location>
</feature>
<feature type="topological domain" description="Mitochondrial intermembrane" evidence="3">
    <location>
        <begin position="1"/>
        <end position="3"/>
    </location>
</feature>
<feature type="transmembrane region" description="Helical" evidence="3">
    <location>
        <begin position="4"/>
        <end position="26"/>
    </location>
</feature>
<feature type="topological domain" description="Cytoplasmic" evidence="3">
    <location>
        <begin position="27"/>
        <end position="147"/>
    </location>
</feature>
<gene>
    <name type="primary">tomm20</name>
    <name type="ORF">TNeu065b24.1</name>
</gene>
<dbReference type="EMBL" id="CR760251">
    <property type="protein sequence ID" value="CAJ83083.1"/>
    <property type="molecule type" value="mRNA"/>
</dbReference>
<dbReference type="EMBL" id="BC076705">
    <property type="protein sequence ID" value="AAH76705.1"/>
    <property type="molecule type" value="mRNA"/>
</dbReference>
<dbReference type="RefSeq" id="NP_001005024.1">
    <property type="nucleotide sequence ID" value="NM_001005024.1"/>
</dbReference>
<dbReference type="SMR" id="Q6DFM9"/>
<dbReference type="FunCoup" id="Q6DFM9">
    <property type="interactions" value="1513"/>
</dbReference>
<dbReference type="STRING" id="8364.ENSXETP00000045947"/>
<dbReference type="PaxDb" id="8364-ENSXETP00000053107"/>
<dbReference type="DNASU" id="448537"/>
<dbReference type="GeneID" id="448537"/>
<dbReference type="KEGG" id="xtr:448537"/>
<dbReference type="AGR" id="Xenbase:XB-GENE-972815"/>
<dbReference type="CTD" id="9804"/>
<dbReference type="Xenbase" id="XB-GENE-972815">
    <property type="gene designation" value="tomm20"/>
</dbReference>
<dbReference type="eggNOG" id="KOG4056">
    <property type="taxonomic scope" value="Eukaryota"/>
</dbReference>
<dbReference type="InParanoid" id="Q6DFM9"/>
<dbReference type="OMA" id="DMIAYDG"/>
<dbReference type="OrthoDB" id="2154253at2759"/>
<dbReference type="Reactome" id="R-XTR-5205685">
    <property type="pathway name" value="PINK1-PRKN Mediated Mitophagy"/>
</dbReference>
<dbReference type="Reactome" id="R-XTR-5689880">
    <property type="pathway name" value="Ub-specific processing proteases"/>
</dbReference>
<dbReference type="Proteomes" id="UP000008143">
    <property type="component" value="Chromosome 5"/>
</dbReference>
<dbReference type="Bgee" id="ENSXETG00000024650">
    <property type="expression patterns" value="Expressed in heart and 13 other cell types or tissues"/>
</dbReference>
<dbReference type="GO" id="GO:0005742">
    <property type="term" value="C:mitochondrial outer membrane translocase complex"/>
    <property type="evidence" value="ECO:0007669"/>
    <property type="project" value="InterPro"/>
</dbReference>
<dbReference type="GO" id="GO:0006886">
    <property type="term" value="P:intracellular protein transport"/>
    <property type="evidence" value="ECO:0007669"/>
    <property type="project" value="InterPro"/>
</dbReference>
<dbReference type="GO" id="GO:0006605">
    <property type="term" value="P:protein targeting"/>
    <property type="evidence" value="ECO:0007669"/>
    <property type="project" value="InterPro"/>
</dbReference>
<dbReference type="FunFam" id="1.20.960.10:FF:000001">
    <property type="entry name" value="Mitochondrial import receptor subunit TOM20 homolog"/>
    <property type="match status" value="1"/>
</dbReference>
<dbReference type="Gene3D" id="1.20.960.10">
    <property type="entry name" value="Mitochondrial outer membrane translocase complex, subunit Tom20 domain"/>
    <property type="match status" value="1"/>
</dbReference>
<dbReference type="InterPro" id="IPR002056">
    <property type="entry name" value="MAS20"/>
</dbReference>
<dbReference type="InterPro" id="IPR022422">
    <property type="entry name" value="MAS20_rcpt_metazoan"/>
</dbReference>
<dbReference type="InterPro" id="IPR023392">
    <property type="entry name" value="Tom20_dom_sf"/>
</dbReference>
<dbReference type="PANTHER" id="PTHR12430">
    <property type="entry name" value="MITOCHONDRIAL IMPORT RECEPTOR SUBUNIT TOM20"/>
    <property type="match status" value="1"/>
</dbReference>
<dbReference type="PANTHER" id="PTHR12430:SF0">
    <property type="entry name" value="TRANSLOCASE OF OUTER MITOCHONDRIAL MEMBRANE 20"/>
    <property type="match status" value="1"/>
</dbReference>
<dbReference type="Pfam" id="PF02064">
    <property type="entry name" value="MAS20"/>
    <property type="match status" value="1"/>
</dbReference>
<dbReference type="PIRSF" id="PIRSF037707">
    <property type="entry name" value="MAS20_rcpt"/>
    <property type="match status" value="1"/>
</dbReference>
<dbReference type="PRINTS" id="PR01989">
    <property type="entry name" value="EUOM20RECPTR"/>
</dbReference>
<dbReference type="PRINTS" id="PR00351">
    <property type="entry name" value="OM20RECEPTOR"/>
</dbReference>
<dbReference type="SUPFAM" id="SSF47157">
    <property type="entry name" value="Mitochondrial import receptor subunit Tom20"/>
    <property type="match status" value="1"/>
</dbReference>
<sequence length="147" mass="16521">MVVVGKTSAIAAGVCGALFLGYCIYFDRKRRSDPNFKNRLREKRRKQKIAKERAGQSRLPDLKDAEAVQKFFLEEIQLGEELLAQGDFEKGVDHLTNAIAICGQPQQLLQVLQQTLPPPVFQMLLTKLPTINQRIGNAQNLAEDDVE</sequence>
<comment type="function">
    <text evidence="1">Central component of the receptor complex responsible for the recognition and translocation of cytosolically synthesized mitochondrial preproteins. Together with tom22 functions as the transit peptide receptor at the surface of the mitochondrion outer membrane and facilitates the movement of preproteins into the tom40 translocation pore (By similarity).</text>
</comment>
<comment type="subunit">
    <text evidence="2">Forms part of the preprotein translocase complex of the outer mitochondrial membrane (TOM complex). Interacts with tom22 (By similarity).</text>
</comment>
<comment type="subcellular location">
    <subcellularLocation>
        <location evidence="2">Mitochondrion outer membrane</location>
        <topology evidence="3">Single-pass membrane protein</topology>
    </subcellularLocation>
</comment>
<comment type="similarity">
    <text evidence="4">Belongs to the Tom20 family.</text>
</comment>